<gene>
    <name evidence="1" type="primary">rplX</name>
    <name type="ordered locus">CHU_3151</name>
</gene>
<comment type="function">
    <text evidence="1">One of two assembly initiator proteins, it binds directly to the 5'-end of the 23S rRNA, where it nucleates assembly of the 50S subunit.</text>
</comment>
<comment type="function">
    <text evidence="1">One of the proteins that surrounds the polypeptide exit tunnel on the outside of the subunit.</text>
</comment>
<comment type="subunit">
    <text evidence="1">Part of the 50S ribosomal subunit.</text>
</comment>
<comment type="similarity">
    <text evidence="1">Belongs to the universal ribosomal protein uL24 family.</text>
</comment>
<evidence type="ECO:0000255" key="1">
    <source>
        <dbReference type="HAMAP-Rule" id="MF_01326"/>
    </source>
</evidence>
<evidence type="ECO:0000305" key="2"/>
<feature type="chain" id="PRO_0000355673" description="Large ribosomal subunit protein uL24">
    <location>
        <begin position="1"/>
        <end position="111"/>
    </location>
</feature>
<proteinExistence type="inferred from homology"/>
<dbReference type="EMBL" id="CP000383">
    <property type="protein sequence ID" value="ABG60391.1"/>
    <property type="molecule type" value="Genomic_DNA"/>
</dbReference>
<dbReference type="RefSeq" id="WP_011586500.1">
    <property type="nucleotide sequence ID" value="NC_008255.1"/>
</dbReference>
<dbReference type="SMR" id="Q11QC3"/>
<dbReference type="STRING" id="269798.CHU_3151"/>
<dbReference type="KEGG" id="chu:CHU_3151"/>
<dbReference type="eggNOG" id="COG0198">
    <property type="taxonomic scope" value="Bacteria"/>
</dbReference>
<dbReference type="HOGENOM" id="CLU_093315_2_0_10"/>
<dbReference type="OrthoDB" id="9807419at2"/>
<dbReference type="Proteomes" id="UP000001822">
    <property type="component" value="Chromosome"/>
</dbReference>
<dbReference type="GO" id="GO:1990904">
    <property type="term" value="C:ribonucleoprotein complex"/>
    <property type="evidence" value="ECO:0007669"/>
    <property type="project" value="UniProtKB-KW"/>
</dbReference>
<dbReference type="GO" id="GO:0005840">
    <property type="term" value="C:ribosome"/>
    <property type="evidence" value="ECO:0007669"/>
    <property type="project" value="UniProtKB-KW"/>
</dbReference>
<dbReference type="GO" id="GO:0019843">
    <property type="term" value="F:rRNA binding"/>
    <property type="evidence" value="ECO:0007669"/>
    <property type="project" value="UniProtKB-UniRule"/>
</dbReference>
<dbReference type="GO" id="GO:0003735">
    <property type="term" value="F:structural constituent of ribosome"/>
    <property type="evidence" value="ECO:0007669"/>
    <property type="project" value="InterPro"/>
</dbReference>
<dbReference type="GO" id="GO:0006412">
    <property type="term" value="P:translation"/>
    <property type="evidence" value="ECO:0007669"/>
    <property type="project" value="UniProtKB-UniRule"/>
</dbReference>
<dbReference type="CDD" id="cd06089">
    <property type="entry name" value="KOW_RPL26"/>
    <property type="match status" value="1"/>
</dbReference>
<dbReference type="FunFam" id="2.30.30.30:FF:000004">
    <property type="entry name" value="50S ribosomal protein L24"/>
    <property type="match status" value="1"/>
</dbReference>
<dbReference type="Gene3D" id="2.30.30.30">
    <property type="match status" value="1"/>
</dbReference>
<dbReference type="HAMAP" id="MF_01326_B">
    <property type="entry name" value="Ribosomal_uL24_B"/>
    <property type="match status" value="1"/>
</dbReference>
<dbReference type="InterPro" id="IPR005824">
    <property type="entry name" value="KOW"/>
</dbReference>
<dbReference type="InterPro" id="IPR014722">
    <property type="entry name" value="Rib_uL2_dom2"/>
</dbReference>
<dbReference type="InterPro" id="IPR003256">
    <property type="entry name" value="Ribosomal_uL24"/>
</dbReference>
<dbReference type="InterPro" id="IPR041988">
    <property type="entry name" value="Ribosomal_uL24_KOW"/>
</dbReference>
<dbReference type="InterPro" id="IPR008991">
    <property type="entry name" value="Translation_prot_SH3-like_sf"/>
</dbReference>
<dbReference type="NCBIfam" id="TIGR01079">
    <property type="entry name" value="rplX_bact"/>
    <property type="match status" value="1"/>
</dbReference>
<dbReference type="PANTHER" id="PTHR12903">
    <property type="entry name" value="MITOCHONDRIAL RIBOSOMAL PROTEIN L24"/>
    <property type="match status" value="1"/>
</dbReference>
<dbReference type="Pfam" id="PF00467">
    <property type="entry name" value="KOW"/>
    <property type="match status" value="1"/>
</dbReference>
<dbReference type="Pfam" id="PF17136">
    <property type="entry name" value="ribosomal_L24"/>
    <property type="match status" value="1"/>
</dbReference>
<dbReference type="SMART" id="SM00739">
    <property type="entry name" value="KOW"/>
    <property type="match status" value="1"/>
</dbReference>
<dbReference type="SUPFAM" id="SSF50104">
    <property type="entry name" value="Translation proteins SH3-like domain"/>
    <property type="match status" value="1"/>
</dbReference>
<reference key="1">
    <citation type="journal article" date="2007" name="Appl. Environ. Microbiol.">
        <title>Genome sequence of the cellulolytic gliding bacterium Cytophaga hutchinsonii.</title>
        <authorList>
            <person name="Xie G."/>
            <person name="Bruce D.C."/>
            <person name="Challacombe J.F."/>
            <person name="Chertkov O."/>
            <person name="Detter J.C."/>
            <person name="Gilna P."/>
            <person name="Han C.S."/>
            <person name="Lucas S."/>
            <person name="Misra M."/>
            <person name="Myers G.L."/>
            <person name="Richardson P."/>
            <person name="Tapia R."/>
            <person name="Thayer N."/>
            <person name="Thompson L.S."/>
            <person name="Brettin T.S."/>
            <person name="Henrissat B."/>
            <person name="Wilson D.B."/>
            <person name="McBride M.J."/>
        </authorList>
    </citation>
    <scope>NUCLEOTIDE SEQUENCE [LARGE SCALE GENOMIC DNA]</scope>
    <source>
        <strain>ATCC 33406 / DSM 1761 / JCM 20678 / CIP 103989 / IAM 12607 / NBRC 15051 / NCIMB 9469 / D465</strain>
    </source>
</reference>
<name>RL24_CYTH3</name>
<protein>
    <recommendedName>
        <fullName evidence="1">Large ribosomal subunit protein uL24</fullName>
    </recommendedName>
    <alternativeName>
        <fullName evidence="2">50S ribosomal protein L24</fullName>
    </alternativeName>
</protein>
<organism>
    <name type="scientific">Cytophaga hutchinsonii (strain ATCC 33406 / DSM 1761 / CIP 103989 / NBRC 15051 / NCIMB 9469 / D465)</name>
    <dbReference type="NCBI Taxonomy" id="269798"/>
    <lineage>
        <taxon>Bacteria</taxon>
        <taxon>Pseudomonadati</taxon>
        <taxon>Bacteroidota</taxon>
        <taxon>Cytophagia</taxon>
        <taxon>Cytophagales</taxon>
        <taxon>Cytophagaceae</taxon>
        <taxon>Cytophaga</taxon>
    </lineage>
</organism>
<accession>Q11QC3</accession>
<sequence length="111" mass="12096">MASNKQTKLHVRTGDNVIVISGDDKRKSGKVLSVDKENQKAIVEGINIVTKHNKPTANVPNGGIVKKEAPIHISKLMIADPKTGKATRIGRKEDKNGKMVRYAKQSGEVIK</sequence>
<keyword id="KW-1185">Reference proteome</keyword>
<keyword id="KW-0687">Ribonucleoprotein</keyword>
<keyword id="KW-0689">Ribosomal protein</keyword>
<keyword id="KW-0694">RNA-binding</keyword>
<keyword id="KW-0699">rRNA-binding</keyword>